<accession>A5EYJ8</accession>
<accession>C3M7L8</accession>
<gene>
    <name evidence="1" type="primary">pepT</name>
    <name type="ordered locus">VC0395_1096</name>
    <name type="ordered locus">VC395_A0171</name>
</gene>
<proteinExistence type="inferred from homology"/>
<sequence>MKNLVGRFMRYVTFDTQSKPKNHHCPSSTGQKVFAQALYEELLELGLSDVSLDDHGYVMAKLPSNVNYPVPAIGFIAHMDTSPDACGKHVKPQIVEDYQGGDIALGKGDEVLSPIQYPDLHLLHGYNLITTDGTTLLGADNKAGIAEIITAMEILLADSSIPHGDISIAFTPDEEIGRGANHFDVAKFAAQWAYTIDGGPIGELEYENFNAATATVVCHGVNLHPGTAKDKMVNAMHIAAQFILMMPENETPQHTEGYQGFYHLSGATMSVAKSELKYILRDFEASGLQARQALMQAKVAELNQQLKKGRVEVSFEQSYSNMKEKVEPHPHIIELAKQAMVACDVEPKIKPIRGGTDGARLSFMGLPCPNIFTGGYNFHGIHEFITIEGMEAAVQVIMKLAEKTALHYRQ</sequence>
<organism>
    <name type="scientific">Vibrio cholerae serotype O1 (strain ATCC 39541 / Classical Ogawa 395 / O395)</name>
    <dbReference type="NCBI Taxonomy" id="345073"/>
    <lineage>
        <taxon>Bacteria</taxon>
        <taxon>Pseudomonadati</taxon>
        <taxon>Pseudomonadota</taxon>
        <taxon>Gammaproteobacteria</taxon>
        <taxon>Vibrionales</taxon>
        <taxon>Vibrionaceae</taxon>
        <taxon>Vibrio</taxon>
    </lineage>
</organism>
<comment type="function">
    <text evidence="1">Cleaves the N-terminal amino acid of tripeptides.</text>
</comment>
<comment type="catalytic activity">
    <reaction evidence="1">
        <text>Release of the N-terminal residue from a tripeptide.</text>
        <dbReference type="EC" id="3.4.11.4"/>
    </reaction>
</comment>
<comment type="cofactor">
    <cofactor evidence="1">
        <name>Zn(2+)</name>
        <dbReference type="ChEBI" id="CHEBI:29105"/>
    </cofactor>
    <text evidence="1">Binds 2 Zn(2+) ions per subunit.</text>
</comment>
<comment type="subcellular location">
    <subcellularLocation>
        <location evidence="1">Cytoplasm</location>
    </subcellularLocation>
</comment>
<comment type="similarity">
    <text evidence="1">Belongs to the peptidase M20B family.</text>
</comment>
<reference key="1">
    <citation type="submission" date="2007-03" db="EMBL/GenBank/DDBJ databases">
        <authorList>
            <person name="Heidelberg J."/>
        </authorList>
    </citation>
    <scope>NUCLEOTIDE SEQUENCE [LARGE SCALE GENOMIC DNA]</scope>
    <source>
        <strain>ATCC 39541 / Classical Ogawa 395 / O395</strain>
    </source>
</reference>
<reference key="2">
    <citation type="journal article" date="2008" name="PLoS ONE">
        <title>A recalibrated molecular clock and independent origins for the cholera pandemic clones.</title>
        <authorList>
            <person name="Feng L."/>
            <person name="Reeves P.R."/>
            <person name="Lan R."/>
            <person name="Ren Y."/>
            <person name="Gao C."/>
            <person name="Zhou Z."/>
            <person name="Ren Y."/>
            <person name="Cheng J."/>
            <person name="Wang W."/>
            <person name="Wang J."/>
            <person name="Qian W."/>
            <person name="Li D."/>
            <person name="Wang L."/>
        </authorList>
    </citation>
    <scope>NUCLEOTIDE SEQUENCE [LARGE SCALE GENOMIC DNA]</scope>
    <source>
        <strain>ATCC 39541 / Classical Ogawa 395 / O395</strain>
    </source>
</reference>
<evidence type="ECO:0000255" key="1">
    <source>
        <dbReference type="HAMAP-Rule" id="MF_00550"/>
    </source>
</evidence>
<feature type="chain" id="PRO_1000072556" description="Peptidase T">
    <location>
        <begin position="1"/>
        <end position="410"/>
    </location>
</feature>
<feature type="active site" evidence="1">
    <location>
        <position position="80"/>
    </location>
</feature>
<feature type="active site" description="Proton acceptor" evidence="1">
    <location>
        <position position="174"/>
    </location>
</feature>
<feature type="binding site" evidence="1">
    <location>
        <position position="78"/>
    </location>
    <ligand>
        <name>Zn(2+)</name>
        <dbReference type="ChEBI" id="CHEBI:29105"/>
        <label>1</label>
    </ligand>
</feature>
<feature type="binding site" evidence="1">
    <location>
        <position position="140"/>
    </location>
    <ligand>
        <name>Zn(2+)</name>
        <dbReference type="ChEBI" id="CHEBI:29105"/>
        <label>1</label>
    </ligand>
</feature>
<feature type="binding site" evidence="1">
    <location>
        <position position="140"/>
    </location>
    <ligand>
        <name>Zn(2+)</name>
        <dbReference type="ChEBI" id="CHEBI:29105"/>
        <label>2</label>
    </ligand>
</feature>
<feature type="binding site" evidence="1">
    <location>
        <position position="175"/>
    </location>
    <ligand>
        <name>Zn(2+)</name>
        <dbReference type="ChEBI" id="CHEBI:29105"/>
        <label>2</label>
    </ligand>
</feature>
<feature type="binding site" evidence="1">
    <location>
        <position position="197"/>
    </location>
    <ligand>
        <name>Zn(2+)</name>
        <dbReference type="ChEBI" id="CHEBI:29105"/>
        <label>1</label>
    </ligand>
</feature>
<feature type="binding site" evidence="1">
    <location>
        <position position="379"/>
    </location>
    <ligand>
        <name>Zn(2+)</name>
        <dbReference type="ChEBI" id="CHEBI:29105"/>
        <label>2</label>
    </ligand>
</feature>
<name>PEPT_VIBC3</name>
<protein>
    <recommendedName>
        <fullName evidence="1">Peptidase T</fullName>
        <ecNumber evidence="1">3.4.11.4</ecNumber>
    </recommendedName>
    <alternativeName>
        <fullName evidence="1">Aminotripeptidase</fullName>
        <shortName evidence="1">Tripeptidase</shortName>
    </alternativeName>
    <alternativeName>
        <fullName evidence="1">Tripeptide aminopeptidase</fullName>
    </alternativeName>
</protein>
<dbReference type="EC" id="3.4.11.4" evidence="1"/>
<dbReference type="EMBL" id="CP000626">
    <property type="protein sequence ID" value="ABQ18537.1"/>
    <property type="molecule type" value="Genomic_DNA"/>
</dbReference>
<dbReference type="EMBL" id="CP001236">
    <property type="protein sequence ID" value="ACP11014.1"/>
    <property type="molecule type" value="Genomic_DNA"/>
</dbReference>
<dbReference type="RefSeq" id="WP_000793867.1">
    <property type="nucleotide sequence ID" value="NZ_JAACZH010000004.1"/>
</dbReference>
<dbReference type="SMR" id="A5EYJ8"/>
<dbReference type="MEROPS" id="M20.003"/>
<dbReference type="KEGG" id="vco:VC0395_1096"/>
<dbReference type="KEGG" id="vcr:VC395_A0171"/>
<dbReference type="PATRIC" id="fig|345073.21.peg.2932"/>
<dbReference type="eggNOG" id="COG2195">
    <property type="taxonomic scope" value="Bacteria"/>
</dbReference>
<dbReference type="HOGENOM" id="CLU_053676_0_0_6"/>
<dbReference type="OrthoDB" id="9804934at2"/>
<dbReference type="Proteomes" id="UP000000249">
    <property type="component" value="Chromosome 1"/>
</dbReference>
<dbReference type="GO" id="GO:0005829">
    <property type="term" value="C:cytosol"/>
    <property type="evidence" value="ECO:0007669"/>
    <property type="project" value="TreeGrafter"/>
</dbReference>
<dbReference type="GO" id="GO:0008237">
    <property type="term" value="F:metallopeptidase activity"/>
    <property type="evidence" value="ECO:0007669"/>
    <property type="project" value="UniProtKB-KW"/>
</dbReference>
<dbReference type="GO" id="GO:0045148">
    <property type="term" value="F:tripeptide aminopeptidase activity"/>
    <property type="evidence" value="ECO:0007669"/>
    <property type="project" value="UniProtKB-UniRule"/>
</dbReference>
<dbReference type="GO" id="GO:0008270">
    <property type="term" value="F:zinc ion binding"/>
    <property type="evidence" value="ECO:0007669"/>
    <property type="project" value="UniProtKB-UniRule"/>
</dbReference>
<dbReference type="GO" id="GO:0043171">
    <property type="term" value="P:peptide catabolic process"/>
    <property type="evidence" value="ECO:0007669"/>
    <property type="project" value="UniProtKB-UniRule"/>
</dbReference>
<dbReference type="GO" id="GO:0006508">
    <property type="term" value="P:proteolysis"/>
    <property type="evidence" value="ECO:0007669"/>
    <property type="project" value="UniProtKB-UniRule"/>
</dbReference>
<dbReference type="CDD" id="cd03892">
    <property type="entry name" value="M20_peptT"/>
    <property type="match status" value="1"/>
</dbReference>
<dbReference type="Gene3D" id="3.30.70.360">
    <property type="match status" value="1"/>
</dbReference>
<dbReference type="Gene3D" id="3.40.630.10">
    <property type="entry name" value="Zn peptidases"/>
    <property type="match status" value="1"/>
</dbReference>
<dbReference type="HAMAP" id="MF_00550">
    <property type="entry name" value="Aminopeptidase_M20"/>
    <property type="match status" value="1"/>
</dbReference>
<dbReference type="InterPro" id="IPR001261">
    <property type="entry name" value="ArgE/DapE_CS"/>
</dbReference>
<dbReference type="InterPro" id="IPR036264">
    <property type="entry name" value="Bact_exopeptidase_dim_dom"/>
</dbReference>
<dbReference type="InterPro" id="IPR002933">
    <property type="entry name" value="Peptidase_M20"/>
</dbReference>
<dbReference type="InterPro" id="IPR011650">
    <property type="entry name" value="Peptidase_M20_dimer"/>
</dbReference>
<dbReference type="InterPro" id="IPR010161">
    <property type="entry name" value="Peptidase_M20B"/>
</dbReference>
<dbReference type="NCBIfam" id="TIGR01882">
    <property type="entry name" value="peptidase-T"/>
    <property type="match status" value="1"/>
</dbReference>
<dbReference type="NCBIfam" id="NF003976">
    <property type="entry name" value="PRK05469.1"/>
    <property type="match status" value="1"/>
</dbReference>
<dbReference type="NCBIfam" id="NF009920">
    <property type="entry name" value="PRK13381.1"/>
    <property type="match status" value="1"/>
</dbReference>
<dbReference type="PANTHER" id="PTHR42994">
    <property type="entry name" value="PEPTIDASE T"/>
    <property type="match status" value="1"/>
</dbReference>
<dbReference type="PANTHER" id="PTHR42994:SF1">
    <property type="entry name" value="PEPTIDASE T"/>
    <property type="match status" value="1"/>
</dbReference>
<dbReference type="Pfam" id="PF07687">
    <property type="entry name" value="M20_dimer"/>
    <property type="match status" value="1"/>
</dbReference>
<dbReference type="Pfam" id="PF01546">
    <property type="entry name" value="Peptidase_M20"/>
    <property type="match status" value="1"/>
</dbReference>
<dbReference type="PIRSF" id="PIRSF037215">
    <property type="entry name" value="Peptidase_M20B"/>
    <property type="match status" value="1"/>
</dbReference>
<dbReference type="SUPFAM" id="SSF55031">
    <property type="entry name" value="Bacterial exopeptidase dimerisation domain"/>
    <property type="match status" value="1"/>
</dbReference>
<dbReference type="SUPFAM" id="SSF53187">
    <property type="entry name" value="Zn-dependent exopeptidases"/>
    <property type="match status" value="1"/>
</dbReference>
<dbReference type="PROSITE" id="PS00758">
    <property type="entry name" value="ARGE_DAPE_CPG2_1"/>
    <property type="match status" value="1"/>
</dbReference>
<dbReference type="PROSITE" id="PS00759">
    <property type="entry name" value="ARGE_DAPE_CPG2_2"/>
    <property type="match status" value="1"/>
</dbReference>
<keyword id="KW-0031">Aminopeptidase</keyword>
<keyword id="KW-0963">Cytoplasm</keyword>
<keyword id="KW-0378">Hydrolase</keyword>
<keyword id="KW-0479">Metal-binding</keyword>
<keyword id="KW-0482">Metalloprotease</keyword>
<keyword id="KW-0645">Protease</keyword>
<keyword id="KW-0862">Zinc</keyword>